<dbReference type="EMBL" id="CP001176">
    <property type="protein sequence ID" value="ACK59068.1"/>
    <property type="molecule type" value="Genomic_DNA"/>
</dbReference>
<dbReference type="RefSeq" id="WP_000366196.1">
    <property type="nucleotide sequence ID" value="NZ_VEHB01000009.1"/>
</dbReference>
<dbReference type="SMR" id="B7H7K5"/>
<dbReference type="KEGG" id="bcb:BCB4264_A0471"/>
<dbReference type="HOGENOM" id="CLU_199533_1_0_9"/>
<dbReference type="Proteomes" id="UP000007096">
    <property type="component" value="Chromosome"/>
</dbReference>
<dbReference type="HAMAP" id="MF_00829">
    <property type="entry name" value="UPF0435"/>
    <property type="match status" value="1"/>
</dbReference>
<dbReference type="InterPro" id="IPR009507">
    <property type="entry name" value="UPF0435"/>
</dbReference>
<dbReference type="Pfam" id="PF06569">
    <property type="entry name" value="DUF1128"/>
    <property type="match status" value="1"/>
</dbReference>
<reference key="1">
    <citation type="submission" date="2008-10" db="EMBL/GenBank/DDBJ databases">
        <title>Genome sequence of Bacillus cereus B4264.</title>
        <authorList>
            <person name="Dodson R.J."/>
            <person name="Durkin A.S."/>
            <person name="Rosovitz M.J."/>
            <person name="Rasko D.A."/>
            <person name="Hoffmaster A."/>
            <person name="Ravel J."/>
            <person name="Sutton G."/>
        </authorList>
    </citation>
    <scope>NUCLEOTIDE SEQUENCE [LARGE SCALE GENOMIC DNA]</scope>
    <source>
        <strain>B4264</strain>
    </source>
</reference>
<comment type="similarity">
    <text evidence="1">Belongs to the UPF0435 family.</text>
</comment>
<accession>B7H7K5</accession>
<proteinExistence type="inferred from homology"/>
<organism>
    <name type="scientific">Bacillus cereus (strain B4264)</name>
    <dbReference type="NCBI Taxonomy" id="405532"/>
    <lineage>
        <taxon>Bacteria</taxon>
        <taxon>Bacillati</taxon>
        <taxon>Bacillota</taxon>
        <taxon>Bacilli</taxon>
        <taxon>Bacillales</taxon>
        <taxon>Bacillaceae</taxon>
        <taxon>Bacillus</taxon>
        <taxon>Bacillus cereus group</taxon>
    </lineage>
</organism>
<feature type="chain" id="PRO_1000200909" description="UPF0435 protein BCB4264_A0471">
    <location>
        <begin position="1"/>
        <end position="74"/>
    </location>
</feature>
<gene>
    <name type="ordered locus">BCB4264_A0471</name>
</gene>
<sequence length="74" mass="8638">MDLSVKSEENVEYMVEAIKEKLRMVNAGAMRAASFNEEMYEDLRDIYDHVMKRETFSISEMQAITEELGTLIKK</sequence>
<name>Y471_BACC4</name>
<protein>
    <recommendedName>
        <fullName evidence="1">UPF0435 protein BCB4264_A0471</fullName>
    </recommendedName>
</protein>
<evidence type="ECO:0000255" key="1">
    <source>
        <dbReference type="HAMAP-Rule" id="MF_00829"/>
    </source>
</evidence>